<keyword id="KW-0961">Cell wall biogenesis/degradation</keyword>
<keyword id="KW-0378">Hydrolase</keyword>
<keyword id="KW-0964">Secreted</keyword>
<keyword id="KW-0732">Signal</keyword>
<organism>
    <name type="scientific">Staphylococcus aureus (strain USA300)</name>
    <dbReference type="NCBI Taxonomy" id="367830"/>
    <lineage>
        <taxon>Bacteria</taxon>
        <taxon>Bacillati</taxon>
        <taxon>Bacillota</taxon>
        <taxon>Bacilli</taxon>
        <taxon>Bacillales</taxon>
        <taxon>Staphylococcaceae</taxon>
        <taxon>Staphylococcus</taxon>
    </lineage>
</organism>
<accession>Q2FG95</accession>
<gene>
    <name type="primary">lytH</name>
    <name type="ordered locus">SAUSA300_1588</name>
</gene>
<dbReference type="EC" id="3.5.1.-"/>
<dbReference type="EMBL" id="CP000255">
    <property type="protein sequence ID" value="ABD21263.1"/>
    <property type="molecule type" value="Genomic_DNA"/>
</dbReference>
<dbReference type="RefSeq" id="WP_000717800.1">
    <property type="nucleotide sequence ID" value="NZ_CP027476.1"/>
</dbReference>
<dbReference type="SMR" id="Q2FG95"/>
<dbReference type="KEGG" id="saa:SAUSA300_1588"/>
<dbReference type="HOGENOM" id="CLU_014322_1_1_9"/>
<dbReference type="Proteomes" id="UP000001939">
    <property type="component" value="Chromosome"/>
</dbReference>
<dbReference type="GO" id="GO:0005576">
    <property type="term" value="C:extracellular region"/>
    <property type="evidence" value="ECO:0007669"/>
    <property type="project" value="UniProtKB-SubCell"/>
</dbReference>
<dbReference type="GO" id="GO:0030288">
    <property type="term" value="C:outer membrane-bounded periplasmic space"/>
    <property type="evidence" value="ECO:0007669"/>
    <property type="project" value="TreeGrafter"/>
</dbReference>
<dbReference type="GO" id="GO:0008745">
    <property type="term" value="F:N-acetylmuramoyl-L-alanine amidase activity"/>
    <property type="evidence" value="ECO:0007669"/>
    <property type="project" value="InterPro"/>
</dbReference>
<dbReference type="GO" id="GO:0071555">
    <property type="term" value="P:cell wall organization"/>
    <property type="evidence" value="ECO:0007669"/>
    <property type="project" value="UniProtKB-KW"/>
</dbReference>
<dbReference type="GO" id="GO:0009253">
    <property type="term" value="P:peptidoglycan catabolic process"/>
    <property type="evidence" value="ECO:0007669"/>
    <property type="project" value="InterPro"/>
</dbReference>
<dbReference type="CDD" id="cd02696">
    <property type="entry name" value="MurNAc-LAA"/>
    <property type="match status" value="1"/>
</dbReference>
<dbReference type="Gene3D" id="2.30.30.40">
    <property type="entry name" value="SH3 Domains"/>
    <property type="match status" value="1"/>
</dbReference>
<dbReference type="Gene3D" id="3.40.630.40">
    <property type="entry name" value="Zn-dependent exopeptidases"/>
    <property type="match status" value="1"/>
</dbReference>
<dbReference type="InterPro" id="IPR017273">
    <property type="entry name" value="LytH"/>
</dbReference>
<dbReference type="InterPro" id="IPR002508">
    <property type="entry name" value="MurNAc-LAA_cat"/>
</dbReference>
<dbReference type="InterPro" id="IPR050695">
    <property type="entry name" value="N-acetylmuramoyl_amidase_3"/>
</dbReference>
<dbReference type="InterPro" id="IPR003646">
    <property type="entry name" value="SH3-like_bac-type"/>
</dbReference>
<dbReference type="PANTHER" id="PTHR30404:SF7">
    <property type="entry name" value="CELL WALL AMIDASE LYTH-RELATED"/>
    <property type="match status" value="1"/>
</dbReference>
<dbReference type="PANTHER" id="PTHR30404">
    <property type="entry name" value="N-ACETYLMURAMOYL-L-ALANINE AMIDASE"/>
    <property type="match status" value="1"/>
</dbReference>
<dbReference type="Pfam" id="PF01520">
    <property type="entry name" value="Amidase_3"/>
    <property type="match status" value="1"/>
</dbReference>
<dbReference type="Pfam" id="PF08239">
    <property type="entry name" value="SH3_3"/>
    <property type="match status" value="1"/>
</dbReference>
<dbReference type="PIRSF" id="PIRSF037730">
    <property type="entry name" value="CWA_LytH_prd"/>
    <property type="match status" value="1"/>
</dbReference>
<dbReference type="SMART" id="SM00646">
    <property type="entry name" value="Ami_3"/>
    <property type="match status" value="1"/>
</dbReference>
<dbReference type="SMART" id="SM00287">
    <property type="entry name" value="SH3b"/>
    <property type="match status" value="1"/>
</dbReference>
<dbReference type="SUPFAM" id="SSF53187">
    <property type="entry name" value="Zn-dependent exopeptidases"/>
    <property type="match status" value="1"/>
</dbReference>
<dbReference type="PROSITE" id="PS51781">
    <property type="entry name" value="SH3B"/>
    <property type="match status" value="1"/>
</dbReference>
<reference key="1">
    <citation type="journal article" date="2006" name="Lancet">
        <title>Complete genome sequence of USA300, an epidemic clone of community-acquired meticillin-resistant Staphylococcus aureus.</title>
        <authorList>
            <person name="Diep B.A."/>
            <person name="Gill S.R."/>
            <person name="Chang R.F."/>
            <person name="Phan T.H."/>
            <person name="Chen J.H."/>
            <person name="Davidson M.G."/>
            <person name="Lin F."/>
            <person name="Lin J."/>
            <person name="Carleton H.A."/>
            <person name="Mongodin E.F."/>
            <person name="Sensabaugh G.F."/>
            <person name="Perdreau-Remington F."/>
        </authorList>
    </citation>
    <scope>NUCLEOTIDE SEQUENCE [LARGE SCALE GENOMIC DNA]</scope>
    <source>
        <strain>USA300</strain>
    </source>
</reference>
<comment type="function">
    <text evidence="1">Probably involved in cell-wall metabolism.</text>
</comment>
<comment type="subcellular location">
    <subcellularLocation>
        <location evidence="5">Secreted</location>
    </subcellularLocation>
</comment>
<comment type="similarity">
    <text evidence="5">Belongs to the N-acetylmuramoyl-L-alanine amidase 3 family.</text>
</comment>
<feature type="signal peptide" evidence="2">
    <location>
        <begin position="1"/>
        <end position="40"/>
    </location>
</feature>
<feature type="chain" id="PRO_0000245427" description="Probable cell wall amidase LytH">
    <location>
        <begin position="41"/>
        <end position="291"/>
    </location>
</feature>
<feature type="domain" description="SH3b" evidence="3">
    <location>
        <begin position="41"/>
        <end position="105"/>
    </location>
</feature>
<feature type="domain" description="MurNAc-LAA" evidence="2">
    <location>
        <begin position="122"/>
        <end position="286"/>
    </location>
</feature>
<feature type="region of interest" description="Disordered" evidence="4">
    <location>
        <begin position="118"/>
        <end position="140"/>
    </location>
</feature>
<sequence length="291" mass="32694">MKKIEAWLSKKGLKNKRTLIVVIAFVLFIIFLFLLLNSNSEDSGNITITENAELRTGPNAAYPVIYKVEKGDHFKKIGKVGKWIEVEDTSSNEKGWIAGWHTNLDIVADNTKEKNPLQGKTIVLDPGHGGSDQGASSNTKYKSLEKDYTLKTAKELQRTLEKEGATVKMTRTDDTYVSLENRDIKGDAYLSIHNDALESSNANGMTVYWYHDNQRALADTLDATIQKKGLLSNRGSRQENYQVLRQTKVPAVLLELGYISNPTDETMIKDQLHRQILEQAIVDGLKIYFSA</sequence>
<name>LYTH_STAA3</name>
<evidence type="ECO:0000250" key="1"/>
<evidence type="ECO:0000255" key="2"/>
<evidence type="ECO:0000255" key="3">
    <source>
        <dbReference type="PROSITE-ProRule" id="PRU01117"/>
    </source>
</evidence>
<evidence type="ECO:0000256" key="4">
    <source>
        <dbReference type="SAM" id="MobiDB-lite"/>
    </source>
</evidence>
<evidence type="ECO:0000305" key="5"/>
<proteinExistence type="inferred from homology"/>
<protein>
    <recommendedName>
        <fullName>Probable cell wall amidase LytH</fullName>
        <ecNumber>3.5.1.-</ecNumber>
    </recommendedName>
</protein>